<accession>Q6AJN1</accession>
<comment type="similarity">
    <text evidence="2">Belongs to the UPF0213 family.</text>
</comment>
<name>Y2720_DESPS</name>
<evidence type="ECO:0000255" key="1">
    <source>
        <dbReference type="PROSITE-ProRule" id="PRU00977"/>
    </source>
</evidence>
<evidence type="ECO:0000305" key="2"/>
<sequence length="110" mass="12702">MNCIQRPETDRPAWFVYIVQCADGTLYTGITTNIARRITEHNSSAKGARYTRSRRPVMLVYRETCRDRSEASKREYAIKQLSPTRKRTLVKASEKGFSAIYFPSYSIKGQ</sequence>
<proteinExistence type="inferred from homology"/>
<gene>
    <name type="ordered locus">DP2720</name>
</gene>
<feature type="chain" id="PRO_0000161356" description="UPF0213 protein DP2720">
    <location>
        <begin position="1"/>
        <end position="110"/>
    </location>
</feature>
<feature type="domain" description="GIY-YIG" evidence="1">
    <location>
        <begin position="12"/>
        <end position="88"/>
    </location>
</feature>
<protein>
    <recommendedName>
        <fullName>UPF0213 protein DP2720</fullName>
    </recommendedName>
</protein>
<keyword id="KW-1185">Reference proteome</keyword>
<organism>
    <name type="scientific">Desulfotalea psychrophila (strain LSv54 / DSM 12343)</name>
    <dbReference type="NCBI Taxonomy" id="177439"/>
    <lineage>
        <taxon>Bacteria</taxon>
        <taxon>Pseudomonadati</taxon>
        <taxon>Thermodesulfobacteriota</taxon>
        <taxon>Desulfobulbia</taxon>
        <taxon>Desulfobulbales</taxon>
        <taxon>Desulfocapsaceae</taxon>
        <taxon>Desulfotalea</taxon>
    </lineage>
</organism>
<reference key="1">
    <citation type="journal article" date="2004" name="Environ. Microbiol.">
        <title>The genome of Desulfotalea psychrophila, a sulfate-reducing bacterium from permanently cold Arctic sediments.</title>
        <authorList>
            <person name="Rabus R."/>
            <person name="Ruepp A."/>
            <person name="Frickey T."/>
            <person name="Rattei T."/>
            <person name="Fartmann B."/>
            <person name="Stark M."/>
            <person name="Bauer M."/>
            <person name="Zibat A."/>
            <person name="Lombardot T."/>
            <person name="Becker I."/>
            <person name="Amann J."/>
            <person name="Gellner K."/>
            <person name="Teeling H."/>
            <person name="Leuschner W.D."/>
            <person name="Gloeckner F.-O."/>
            <person name="Lupas A.N."/>
            <person name="Amann R."/>
            <person name="Klenk H.-P."/>
        </authorList>
    </citation>
    <scope>NUCLEOTIDE SEQUENCE [LARGE SCALE GENOMIC DNA]</scope>
    <source>
        <strain>DSM 12343 / LSv54</strain>
    </source>
</reference>
<dbReference type="EMBL" id="CR522870">
    <property type="protein sequence ID" value="CAG37449.1"/>
    <property type="molecule type" value="Genomic_DNA"/>
</dbReference>
<dbReference type="RefSeq" id="WP_011189961.1">
    <property type="nucleotide sequence ID" value="NC_006138.1"/>
</dbReference>
<dbReference type="SMR" id="Q6AJN1"/>
<dbReference type="STRING" id="177439.DP2720"/>
<dbReference type="KEGG" id="dps:DP2720"/>
<dbReference type="eggNOG" id="COG2827">
    <property type="taxonomic scope" value="Bacteria"/>
</dbReference>
<dbReference type="HOGENOM" id="CLU_135650_0_3_7"/>
<dbReference type="OrthoDB" id="287318at2"/>
<dbReference type="Proteomes" id="UP000000602">
    <property type="component" value="Chromosome"/>
</dbReference>
<dbReference type="CDD" id="cd10456">
    <property type="entry name" value="GIY-YIG_UPF0213"/>
    <property type="match status" value="1"/>
</dbReference>
<dbReference type="Gene3D" id="3.40.1440.10">
    <property type="entry name" value="GIY-YIG endonuclease"/>
    <property type="match status" value="1"/>
</dbReference>
<dbReference type="InterPro" id="IPR000305">
    <property type="entry name" value="GIY-YIG_endonuc"/>
</dbReference>
<dbReference type="InterPro" id="IPR035901">
    <property type="entry name" value="GIY-YIG_endonuc_sf"/>
</dbReference>
<dbReference type="InterPro" id="IPR050190">
    <property type="entry name" value="UPF0213_domain"/>
</dbReference>
<dbReference type="PANTHER" id="PTHR34477">
    <property type="entry name" value="UPF0213 PROTEIN YHBQ"/>
    <property type="match status" value="1"/>
</dbReference>
<dbReference type="PANTHER" id="PTHR34477:SF1">
    <property type="entry name" value="UPF0213 PROTEIN YHBQ"/>
    <property type="match status" value="1"/>
</dbReference>
<dbReference type="Pfam" id="PF01541">
    <property type="entry name" value="GIY-YIG"/>
    <property type="match status" value="1"/>
</dbReference>
<dbReference type="SMART" id="SM00465">
    <property type="entry name" value="GIYc"/>
    <property type="match status" value="1"/>
</dbReference>
<dbReference type="SUPFAM" id="SSF82771">
    <property type="entry name" value="GIY-YIG endonuclease"/>
    <property type="match status" value="1"/>
</dbReference>
<dbReference type="PROSITE" id="PS50164">
    <property type="entry name" value="GIY_YIG"/>
    <property type="match status" value="1"/>
</dbReference>